<name>SUA5_SCHPO</name>
<comment type="function">
    <text evidence="1">Required for the formation of a threonylcarbamoyl group on adenosine at position 37 (t(6)A37) in tRNAs that read codons beginning with adenine. Likely catalyzes the conversion of L-threonine, HCO(3)(-)/CO(2) and ATP to give threonylcarbamoyl-AMP (TC-AMP) as the acyladenylate intermediate, with the release of diphosphate. Required for normal translation, by ensuring translation fidelity at the level of codon recognition, appropriate translation initiation selection and maintenance of reading frame. Also involved in telomere replication. Binds to single-stranded telomeric (ssTG) DNA and positively regulates telomere length (By similarity).</text>
</comment>
<comment type="catalytic activity">
    <reaction>
        <text>L-threonine + hydrogencarbonate + ATP = L-threonylcarbamoyladenylate + diphosphate + H2O</text>
        <dbReference type="Rhea" id="RHEA:36407"/>
        <dbReference type="ChEBI" id="CHEBI:15377"/>
        <dbReference type="ChEBI" id="CHEBI:17544"/>
        <dbReference type="ChEBI" id="CHEBI:30616"/>
        <dbReference type="ChEBI" id="CHEBI:33019"/>
        <dbReference type="ChEBI" id="CHEBI:57926"/>
        <dbReference type="ChEBI" id="CHEBI:73682"/>
        <dbReference type="EC" id="2.7.7.87"/>
    </reaction>
</comment>
<comment type="subcellular location">
    <subcellularLocation>
        <location evidence="3">Cytoplasm</location>
    </subcellularLocation>
    <subcellularLocation>
        <location evidence="3">Nucleus</location>
    </subcellularLocation>
    <subcellularLocation>
        <location evidence="1">Chromosome</location>
        <location evidence="1">Telomere</location>
    </subcellularLocation>
</comment>
<comment type="similarity">
    <text evidence="4">Belongs to the SUA5 family.</text>
</comment>
<evidence type="ECO:0000250" key="1"/>
<evidence type="ECO:0000255" key="2">
    <source>
        <dbReference type="PROSITE-ProRule" id="PRU00518"/>
    </source>
</evidence>
<evidence type="ECO:0000269" key="3">
    <source>
    </source>
</evidence>
<evidence type="ECO:0000305" key="4"/>
<gene>
    <name type="primary">sua5</name>
    <name type="ORF">SPCC895.03c</name>
</gene>
<organism>
    <name type="scientific">Schizosaccharomyces pombe (strain 972 / ATCC 24843)</name>
    <name type="common">Fission yeast</name>
    <dbReference type="NCBI Taxonomy" id="284812"/>
    <lineage>
        <taxon>Eukaryota</taxon>
        <taxon>Fungi</taxon>
        <taxon>Dikarya</taxon>
        <taxon>Ascomycota</taxon>
        <taxon>Taphrinomycotina</taxon>
        <taxon>Schizosaccharomycetes</taxon>
        <taxon>Schizosaccharomycetales</taxon>
        <taxon>Schizosaccharomycetaceae</taxon>
        <taxon>Schizosaccharomyces</taxon>
    </lineage>
</organism>
<protein>
    <recommendedName>
        <fullName>Threonylcarbamoyl-AMP synthase</fullName>
        <shortName>TC-AMP synthase</shortName>
        <ecNumber>2.7.7.87</ecNumber>
    </recommendedName>
    <alternativeName>
        <fullName>L-threonylcarbamoyladenylate synthase</fullName>
    </alternativeName>
    <alternativeName>
        <fullName>t(6)A37 threonylcarbamoyladenosine biosynthesis protein sua5</fullName>
    </alternativeName>
    <alternativeName>
        <fullName>tRNA threonylcarbamoyladenosine biosynthesis protein sua5</fullName>
    </alternativeName>
</protein>
<reference key="1">
    <citation type="journal article" date="2002" name="Nature">
        <title>The genome sequence of Schizosaccharomyces pombe.</title>
        <authorList>
            <person name="Wood V."/>
            <person name="Gwilliam R."/>
            <person name="Rajandream M.A."/>
            <person name="Lyne M.H."/>
            <person name="Lyne R."/>
            <person name="Stewart A."/>
            <person name="Sgouros J.G."/>
            <person name="Peat N."/>
            <person name="Hayles J."/>
            <person name="Baker S.G."/>
            <person name="Basham D."/>
            <person name="Bowman S."/>
            <person name="Brooks K."/>
            <person name="Brown D."/>
            <person name="Brown S."/>
            <person name="Chillingworth T."/>
            <person name="Churcher C.M."/>
            <person name="Collins M."/>
            <person name="Connor R."/>
            <person name="Cronin A."/>
            <person name="Davis P."/>
            <person name="Feltwell T."/>
            <person name="Fraser A."/>
            <person name="Gentles S."/>
            <person name="Goble A."/>
            <person name="Hamlin N."/>
            <person name="Harris D.E."/>
            <person name="Hidalgo J."/>
            <person name="Hodgson G."/>
            <person name="Holroyd S."/>
            <person name="Hornsby T."/>
            <person name="Howarth S."/>
            <person name="Huckle E.J."/>
            <person name="Hunt S."/>
            <person name="Jagels K."/>
            <person name="James K.D."/>
            <person name="Jones L."/>
            <person name="Jones M."/>
            <person name="Leather S."/>
            <person name="McDonald S."/>
            <person name="McLean J."/>
            <person name="Mooney P."/>
            <person name="Moule S."/>
            <person name="Mungall K.L."/>
            <person name="Murphy L.D."/>
            <person name="Niblett D."/>
            <person name="Odell C."/>
            <person name="Oliver K."/>
            <person name="O'Neil S."/>
            <person name="Pearson D."/>
            <person name="Quail M.A."/>
            <person name="Rabbinowitsch E."/>
            <person name="Rutherford K.M."/>
            <person name="Rutter S."/>
            <person name="Saunders D."/>
            <person name="Seeger K."/>
            <person name="Sharp S."/>
            <person name="Skelton J."/>
            <person name="Simmonds M.N."/>
            <person name="Squares R."/>
            <person name="Squares S."/>
            <person name="Stevens K."/>
            <person name="Taylor K."/>
            <person name="Taylor R.G."/>
            <person name="Tivey A."/>
            <person name="Walsh S.V."/>
            <person name="Warren T."/>
            <person name="Whitehead S."/>
            <person name="Woodward J.R."/>
            <person name="Volckaert G."/>
            <person name="Aert R."/>
            <person name="Robben J."/>
            <person name="Grymonprez B."/>
            <person name="Weltjens I."/>
            <person name="Vanstreels E."/>
            <person name="Rieger M."/>
            <person name="Schaefer M."/>
            <person name="Mueller-Auer S."/>
            <person name="Gabel C."/>
            <person name="Fuchs M."/>
            <person name="Duesterhoeft A."/>
            <person name="Fritzc C."/>
            <person name="Holzer E."/>
            <person name="Moestl D."/>
            <person name="Hilbert H."/>
            <person name="Borzym K."/>
            <person name="Langer I."/>
            <person name="Beck A."/>
            <person name="Lehrach H."/>
            <person name="Reinhardt R."/>
            <person name="Pohl T.M."/>
            <person name="Eger P."/>
            <person name="Zimmermann W."/>
            <person name="Wedler H."/>
            <person name="Wambutt R."/>
            <person name="Purnelle B."/>
            <person name="Goffeau A."/>
            <person name="Cadieu E."/>
            <person name="Dreano S."/>
            <person name="Gloux S."/>
            <person name="Lelaure V."/>
            <person name="Mottier S."/>
            <person name="Galibert F."/>
            <person name="Aves S.J."/>
            <person name="Xiang Z."/>
            <person name="Hunt C."/>
            <person name="Moore K."/>
            <person name="Hurst S.M."/>
            <person name="Lucas M."/>
            <person name="Rochet M."/>
            <person name="Gaillardin C."/>
            <person name="Tallada V.A."/>
            <person name="Garzon A."/>
            <person name="Thode G."/>
            <person name="Daga R.R."/>
            <person name="Cruzado L."/>
            <person name="Jimenez J."/>
            <person name="Sanchez M."/>
            <person name="del Rey F."/>
            <person name="Benito J."/>
            <person name="Dominguez A."/>
            <person name="Revuelta J.L."/>
            <person name="Moreno S."/>
            <person name="Armstrong J."/>
            <person name="Forsburg S.L."/>
            <person name="Cerutti L."/>
            <person name="Lowe T."/>
            <person name="McCombie W.R."/>
            <person name="Paulsen I."/>
            <person name="Potashkin J."/>
            <person name="Shpakovski G.V."/>
            <person name="Ussery D."/>
            <person name="Barrell B.G."/>
            <person name="Nurse P."/>
        </authorList>
    </citation>
    <scope>NUCLEOTIDE SEQUENCE [LARGE SCALE GENOMIC DNA]</scope>
    <source>
        <strain>972 / ATCC 24843</strain>
    </source>
</reference>
<reference key="2">
    <citation type="journal article" date="2006" name="Nat. Biotechnol.">
        <title>ORFeome cloning and global analysis of protein localization in the fission yeast Schizosaccharomyces pombe.</title>
        <authorList>
            <person name="Matsuyama A."/>
            <person name="Arai R."/>
            <person name="Yashiroda Y."/>
            <person name="Shirai A."/>
            <person name="Kamata A."/>
            <person name="Sekido S."/>
            <person name="Kobayashi Y."/>
            <person name="Hashimoto A."/>
            <person name="Hamamoto M."/>
            <person name="Hiraoka Y."/>
            <person name="Horinouchi S."/>
            <person name="Yoshida M."/>
        </authorList>
    </citation>
    <scope>SUBCELLULAR LOCATION [LARGE SCALE ANALYSIS]</scope>
</reference>
<proteinExistence type="inferred from homology"/>
<accession>O94530</accession>
<feature type="chain" id="PRO_0000315950" description="Threonylcarbamoyl-AMP synthase">
    <location>
        <begin position="1"/>
        <end position="408"/>
    </location>
</feature>
<feature type="domain" description="YrdC-like" evidence="2">
    <location>
        <begin position="39"/>
        <end position="249"/>
    </location>
</feature>
<dbReference type="EC" id="2.7.7.87"/>
<dbReference type="EMBL" id="CU329672">
    <property type="protein sequence ID" value="CAA22839.1"/>
    <property type="molecule type" value="Genomic_DNA"/>
</dbReference>
<dbReference type="PIR" id="T41641">
    <property type="entry name" value="T41641"/>
</dbReference>
<dbReference type="RefSeq" id="NP_588044.1">
    <property type="nucleotide sequence ID" value="NM_001023036.2"/>
</dbReference>
<dbReference type="SMR" id="O94530"/>
<dbReference type="BioGRID" id="276154">
    <property type="interactions" value="1"/>
</dbReference>
<dbReference type="FunCoup" id="O94530">
    <property type="interactions" value="352"/>
</dbReference>
<dbReference type="STRING" id="284812.O94530"/>
<dbReference type="iPTMnet" id="O94530"/>
<dbReference type="PaxDb" id="4896-SPCC895.03c.1"/>
<dbReference type="EnsemblFungi" id="SPCC895.03c.1">
    <property type="protein sequence ID" value="SPCC895.03c.1:pep"/>
    <property type="gene ID" value="SPCC895.03c"/>
</dbReference>
<dbReference type="GeneID" id="2539596"/>
<dbReference type="KEGG" id="spo:2539596"/>
<dbReference type="PomBase" id="SPCC895.03c">
    <property type="gene designation" value="sua5"/>
</dbReference>
<dbReference type="VEuPathDB" id="FungiDB:SPCC895.03c"/>
<dbReference type="eggNOG" id="KOG3051">
    <property type="taxonomic scope" value="Eukaryota"/>
</dbReference>
<dbReference type="HOGENOM" id="CLU_031397_0_0_1"/>
<dbReference type="InParanoid" id="O94530"/>
<dbReference type="OMA" id="YKHYAPD"/>
<dbReference type="PhylomeDB" id="O94530"/>
<dbReference type="PRO" id="PR:O94530"/>
<dbReference type="Proteomes" id="UP000002485">
    <property type="component" value="Chromosome III"/>
</dbReference>
<dbReference type="GO" id="GO:0000781">
    <property type="term" value="C:chromosome, telomeric region"/>
    <property type="evidence" value="ECO:0007669"/>
    <property type="project" value="UniProtKB-SubCell"/>
</dbReference>
<dbReference type="GO" id="GO:0005737">
    <property type="term" value="C:cytoplasm"/>
    <property type="evidence" value="ECO:0000318"/>
    <property type="project" value="GO_Central"/>
</dbReference>
<dbReference type="GO" id="GO:0005829">
    <property type="term" value="C:cytosol"/>
    <property type="evidence" value="ECO:0007005"/>
    <property type="project" value="PomBase"/>
</dbReference>
<dbReference type="GO" id="GO:0005739">
    <property type="term" value="C:mitochondrion"/>
    <property type="evidence" value="ECO:0000266"/>
    <property type="project" value="PomBase"/>
</dbReference>
<dbReference type="GO" id="GO:0005634">
    <property type="term" value="C:nucleus"/>
    <property type="evidence" value="ECO:0007005"/>
    <property type="project" value="PomBase"/>
</dbReference>
<dbReference type="GO" id="GO:0005524">
    <property type="term" value="F:ATP binding"/>
    <property type="evidence" value="ECO:0007669"/>
    <property type="project" value="UniProtKB-KW"/>
</dbReference>
<dbReference type="GO" id="GO:0003677">
    <property type="term" value="F:DNA binding"/>
    <property type="evidence" value="ECO:0007669"/>
    <property type="project" value="UniProtKB-KW"/>
</dbReference>
<dbReference type="GO" id="GO:0003725">
    <property type="term" value="F:double-stranded RNA binding"/>
    <property type="evidence" value="ECO:0007669"/>
    <property type="project" value="InterPro"/>
</dbReference>
<dbReference type="GO" id="GO:0061710">
    <property type="term" value="F:L-threonylcarbamoyladenylate synthase"/>
    <property type="evidence" value="ECO:0007669"/>
    <property type="project" value="UniProtKB-EC"/>
</dbReference>
<dbReference type="GO" id="GO:0016779">
    <property type="term" value="F:nucleotidyltransferase activity"/>
    <property type="evidence" value="ECO:0000318"/>
    <property type="project" value="GO_Central"/>
</dbReference>
<dbReference type="GO" id="GO:0000049">
    <property type="term" value="F:tRNA binding"/>
    <property type="evidence" value="ECO:0000318"/>
    <property type="project" value="GO_Central"/>
</dbReference>
<dbReference type="GO" id="GO:0072670">
    <property type="term" value="P:mitochondrial tRNA threonylcarbamoyladenosine modification"/>
    <property type="evidence" value="ECO:0000304"/>
    <property type="project" value="PomBase"/>
</dbReference>
<dbReference type="GO" id="GO:0006417">
    <property type="term" value="P:regulation of translation"/>
    <property type="evidence" value="ECO:0007669"/>
    <property type="project" value="UniProtKB-KW"/>
</dbReference>
<dbReference type="GO" id="GO:0006450">
    <property type="term" value="P:regulation of translational fidelity"/>
    <property type="evidence" value="ECO:0000318"/>
    <property type="project" value="GO_Central"/>
</dbReference>
<dbReference type="FunFam" id="3.90.870.10:FF:000008">
    <property type="entry name" value="Threonylcarbamoyl-AMP synthase"/>
    <property type="match status" value="1"/>
</dbReference>
<dbReference type="Gene3D" id="3.90.870.10">
    <property type="entry name" value="DHBP synthase"/>
    <property type="match status" value="1"/>
</dbReference>
<dbReference type="Gene3D" id="3.40.50.11030">
    <property type="entry name" value="Threonylcarbamoyl-AMP synthase, C-terminal domain"/>
    <property type="match status" value="1"/>
</dbReference>
<dbReference type="InterPro" id="IPR017945">
    <property type="entry name" value="DHBP_synth_RibB-like_a/b_dom"/>
</dbReference>
<dbReference type="InterPro" id="IPR006070">
    <property type="entry name" value="Sua5-like_dom"/>
</dbReference>
<dbReference type="InterPro" id="IPR038385">
    <property type="entry name" value="Sua5/YwlC_C"/>
</dbReference>
<dbReference type="InterPro" id="IPR005145">
    <property type="entry name" value="Sua5_C"/>
</dbReference>
<dbReference type="InterPro" id="IPR010923">
    <property type="entry name" value="T(6)A37_SUA5"/>
</dbReference>
<dbReference type="InterPro" id="IPR050156">
    <property type="entry name" value="TC-AMP_synthase_SUA5"/>
</dbReference>
<dbReference type="NCBIfam" id="TIGR00057">
    <property type="entry name" value="L-threonylcarbamoyladenylate synthase"/>
    <property type="match status" value="1"/>
</dbReference>
<dbReference type="PANTHER" id="PTHR17490">
    <property type="entry name" value="SUA5"/>
    <property type="match status" value="1"/>
</dbReference>
<dbReference type="PANTHER" id="PTHR17490:SF16">
    <property type="entry name" value="THREONYLCARBAMOYL-AMP SYNTHASE"/>
    <property type="match status" value="1"/>
</dbReference>
<dbReference type="Pfam" id="PF03481">
    <property type="entry name" value="Sua5_C"/>
    <property type="match status" value="1"/>
</dbReference>
<dbReference type="Pfam" id="PF01300">
    <property type="entry name" value="Sua5_yciO_yrdC"/>
    <property type="match status" value="1"/>
</dbReference>
<dbReference type="PIRSF" id="PIRSF004930">
    <property type="entry name" value="Tln_factor_SUA5"/>
    <property type="match status" value="1"/>
</dbReference>
<dbReference type="SUPFAM" id="SSF55821">
    <property type="entry name" value="YrdC/RibB"/>
    <property type="match status" value="1"/>
</dbReference>
<dbReference type="PROSITE" id="PS51163">
    <property type="entry name" value="YRDC"/>
    <property type="match status" value="1"/>
</dbReference>
<sequence length="408" mass="44773">METKIQTVDTRLISFEKPSNDSEHPFEHTRVSIPPSETRSALENAANILRNTDYPVAFPTETVYGLGADARRTEAVLSIYKAKNRPADNPLIVHVASLDQLRRLLLSAYPKAKSEVKNQAHDSEEIIPKVYLPLIKKFWPGPLSILLPVVDEANPPVSPIVTAGQKTFAVRMPQHPVALALISISDSPLAAPSANASTRPSPTLAKHVYNDLQGKIPLILDGGACGVGVESTVVNGLCDPPVILRPGGISLEEIQSSGGAWERTKVFVAKKSDMETDFIPQTPGMKYRHYSPTAKVLLFVNYTESDAYGVFEKYLSEQGITKEKQKIGVLCSKRWNEESFPSHCPFVFLHMGRDGHEITKNLFAQLRDLDLQGVDFVLVEGVSEENEGLAIMNRLGKAASVVFEGPSH</sequence>
<keyword id="KW-0067">ATP-binding</keyword>
<keyword id="KW-0158">Chromosome</keyword>
<keyword id="KW-0963">Cytoplasm</keyword>
<keyword id="KW-0238">DNA-binding</keyword>
<keyword id="KW-0547">Nucleotide-binding</keyword>
<keyword id="KW-0548">Nucleotidyltransferase</keyword>
<keyword id="KW-0539">Nucleus</keyword>
<keyword id="KW-1185">Reference proteome</keyword>
<keyword id="KW-0779">Telomere</keyword>
<keyword id="KW-0808">Transferase</keyword>
<keyword id="KW-0810">Translation regulation</keyword>
<keyword id="KW-0819">tRNA processing</keyword>